<reference key="1">
    <citation type="journal article" date="2005" name="Nature">
        <title>The genome sequence of the rice blast fungus Magnaporthe grisea.</title>
        <authorList>
            <person name="Dean R.A."/>
            <person name="Talbot N.J."/>
            <person name="Ebbole D.J."/>
            <person name="Farman M.L."/>
            <person name="Mitchell T.K."/>
            <person name="Orbach M.J."/>
            <person name="Thon M.R."/>
            <person name="Kulkarni R."/>
            <person name="Xu J.-R."/>
            <person name="Pan H."/>
            <person name="Read N.D."/>
            <person name="Lee Y.-H."/>
            <person name="Carbone I."/>
            <person name="Brown D."/>
            <person name="Oh Y.Y."/>
            <person name="Donofrio N."/>
            <person name="Jeong J.S."/>
            <person name="Soanes D.M."/>
            <person name="Djonovic S."/>
            <person name="Kolomiets E."/>
            <person name="Rehmeyer C."/>
            <person name="Li W."/>
            <person name="Harding M."/>
            <person name="Kim S."/>
            <person name="Lebrun M.-H."/>
            <person name="Bohnert H."/>
            <person name="Coughlan S."/>
            <person name="Butler J."/>
            <person name="Calvo S.E."/>
            <person name="Ma L.-J."/>
            <person name="Nicol R."/>
            <person name="Purcell S."/>
            <person name="Nusbaum C."/>
            <person name="Galagan J.E."/>
            <person name="Birren B.W."/>
        </authorList>
    </citation>
    <scope>NUCLEOTIDE SEQUENCE [LARGE SCALE GENOMIC DNA]</scope>
    <source>
        <strain>70-15 / ATCC MYA-4617 / FGSC 8958</strain>
    </source>
</reference>
<name>PRP28_PYRO7</name>
<comment type="function">
    <text evidence="1">ATP-dependent RNA helicase involved in mRNA splicing. May destabilize the U1/5'-splice site duplex to permit an effective competition for the 5'-splice site by the U6 snRNA, resulting in the switch between U1 and U6 at the 5'-splice site. May also act to unwind the U4/U6 base-pairing interaction in the U4/U6/U5 snRNP, facilitating the first covalent step of splicing (By similarity).</text>
</comment>
<comment type="catalytic activity">
    <reaction>
        <text>ATP + H2O = ADP + phosphate + H(+)</text>
        <dbReference type="Rhea" id="RHEA:13065"/>
        <dbReference type="ChEBI" id="CHEBI:15377"/>
        <dbReference type="ChEBI" id="CHEBI:15378"/>
        <dbReference type="ChEBI" id="CHEBI:30616"/>
        <dbReference type="ChEBI" id="CHEBI:43474"/>
        <dbReference type="ChEBI" id="CHEBI:456216"/>
        <dbReference type="EC" id="3.6.4.13"/>
    </reaction>
</comment>
<comment type="subunit">
    <text evidence="1">Component of the U5 snRNP complex.</text>
</comment>
<comment type="subcellular location">
    <subcellularLocation>
        <location evidence="1">Cytoplasm</location>
    </subcellularLocation>
    <subcellularLocation>
        <location evidence="1">Nucleus</location>
    </subcellularLocation>
</comment>
<comment type="domain">
    <text>The Q motif is unique to and characteristic of the DEAD box family of RNA helicases and controls ATP binding and hydrolysis.</text>
</comment>
<comment type="similarity">
    <text evidence="5">Belongs to the DEAD box helicase family. DDX23/PRP28 subfamily.</text>
</comment>
<gene>
    <name type="primary">PRP28</name>
    <name type="ORF">MGG_01583</name>
</gene>
<proteinExistence type="inferred from homology"/>
<sequence length="674" mass="76093">MAPLDLEEILKKHKAAKAEAAKPRFIPRGQRKKMEEEKKLKVEEEQKRQQEELQKTRSELQKAREELAGLQRVRRQEQSRSRESDHSVPTGPRAMRSYDDDSFNGNGNGSNSNRNNNNNQRDRQDASTKTNGSRTAEEVQEEKKYLERYTGPPAKVSTFSANKKRRRTTDQKFNFDWDPKDDTSQPWRYEETGAHERSANGATEQVRRKKATRDYNDPRLVPWQDKELSQMTTRDWRLFKVNLEIVTKGNNIPNPMRFWEESNLPHVLKDTIKQVGYTEPTPVQRAAIPIALQCRDLIGISKTGSGKTAAFVLPMLSYIEPLPPLNEVTKTEGPYALILAPTRELATQIQAEVIKFATRMGFTVVCLIGNKRTIEEDAFALRNGAEIIVATPGRLVDCLERHLLVLSQCSYVVLDEADRMVDGGFEDSIHKILAALPPSNGKPDDRDAEDPNIMSKFLTPNLRYRQTVMYSATMPPSVERIAKNYLKHPAMVTIGTIGEAVDTVEQQAMWVVSEDERRNKLRAMLNTYGTGKLVIVFVNTKSNCDAVAKDLKSSSFSAVTLHGNKTQDQREAALQSFRDGRTNVLVATDVAARGLDIPDVSLVINFNMAGTIEVYTHRIGRTGRAGKEGMAITFCGPEDHGVLYHLKQIMSKSQMSKVPPWLKDHPEAQSKPTF</sequence>
<organism>
    <name type="scientific">Pyricularia oryzae (strain 70-15 / ATCC MYA-4617 / FGSC 8958)</name>
    <name type="common">Rice blast fungus</name>
    <name type="synonym">Magnaporthe oryzae</name>
    <dbReference type="NCBI Taxonomy" id="242507"/>
    <lineage>
        <taxon>Eukaryota</taxon>
        <taxon>Fungi</taxon>
        <taxon>Dikarya</taxon>
        <taxon>Ascomycota</taxon>
        <taxon>Pezizomycotina</taxon>
        <taxon>Sordariomycetes</taxon>
        <taxon>Sordariomycetidae</taxon>
        <taxon>Magnaporthales</taxon>
        <taxon>Pyriculariaceae</taxon>
        <taxon>Pyricularia</taxon>
    </lineage>
</organism>
<protein>
    <recommendedName>
        <fullName>Pre-mRNA-splicing ATP-dependent RNA helicase PRP28</fullName>
        <ecNumber>3.6.4.13</ecNumber>
    </recommendedName>
</protein>
<dbReference type="EC" id="3.6.4.13"/>
<dbReference type="EMBL" id="CM001232">
    <property type="protein sequence ID" value="EHA54754.1"/>
    <property type="molecule type" value="Genomic_DNA"/>
</dbReference>
<dbReference type="RefSeq" id="XP_003714561.1">
    <property type="nucleotide sequence ID" value="XM_003714513.1"/>
</dbReference>
<dbReference type="SMR" id="A4RK80"/>
<dbReference type="FunCoup" id="A4RK80">
    <property type="interactions" value="891"/>
</dbReference>
<dbReference type="STRING" id="242507.A4RK80"/>
<dbReference type="EnsemblFungi" id="MGG_01583T0">
    <property type="protein sequence ID" value="MGG_01583T0"/>
    <property type="gene ID" value="MGG_01583"/>
</dbReference>
<dbReference type="GeneID" id="2679297"/>
<dbReference type="KEGG" id="mgr:MGG_01583"/>
<dbReference type="VEuPathDB" id="FungiDB:MGG_01583"/>
<dbReference type="eggNOG" id="KOG0333">
    <property type="taxonomic scope" value="Eukaryota"/>
</dbReference>
<dbReference type="HOGENOM" id="CLU_003041_11_3_1"/>
<dbReference type="InParanoid" id="A4RK80"/>
<dbReference type="OMA" id="ARDIKHM"/>
<dbReference type="OrthoDB" id="196131at2759"/>
<dbReference type="Proteomes" id="UP000009058">
    <property type="component" value="Chromosome 2"/>
</dbReference>
<dbReference type="GO" id="GO:0005737">
    <property type="term" value="C:cytoplasm"/>
    <property type="evidence" value="ECO:0007669"/>
    <property type="project" value="UniProtKB-SubCell"/>
</dbReference>
<dbReference type="GO" id="GO:0005634">
    <property type="term" value="C:nucleus"/>
    <property type="evidence" value="ECO:0007669"/>
    <property type="project" value="UniProtKB-SubCell"/>
</dbReference>
<dbReference type="GO" id="GO:0005524">
    <property type="term" value="F:ATP binding"/>
    <property type="evidence" value="ECO:0007669"/>
    <property type="project" value="UniProtKB-KW"/>
</dbReference>
<dbReference type="GO" id="GO:0016887">
    <property type="term" value="F:ATP hydrolysis activity"/>
    <property type="evidence" value="ECO:0007669"/>
    <property type="project" value="RHEA"/>
</dbReference>
<dbReference type="GO" id="GO:0003676">
    <property type="term" value="F:nucleic acid binding"/>
    <property type="evidence" value="ECO:0007669"/>
    <property type="project" value="InterPro"/>
</dbReference>
<dbReference type="GO" id="GO:0003724">
    <property type="term" value="F:RNA helicase activity"/>
    <property type="evidence" value="ECO:0007669"/>
    <property type="project" value="UniProtKB-EC"/>
</dbReference>
<dbReference type="GO" id="GO:0006397">
    <property type="term" value="P:mRNA processing"/>
    <property type="evidence" value="ECO:0007669"/>
    <property type="project" value="UniProtKB-KW"/>
</dbReference>
<dbReference type="GO" id="GO:0008380">
    <property type="term" value="P:RNA splicing"/>
    <property type="evidence" value="ECO:0007669"/>
    <property type="project" value="UniProtKB-KW"/>
</dbReference>
<dbReference type="CDD" id="cd17945">
    <property type="entry name" value="DEADc_DDX23"/>
    <property type="match status" value="1"/>
</dbReference>
<dbReference type="CDD" id="cd18787">
    <property type="entry name" value="SF2_C_DEAD"/>
    <property type="match status" value="1"/>
</dbReference>
<dbReference type="Gene3D" id="3.40.50.300">
    <property type="entry name" value="P-loop containing nucleotide triphosphate hydrolases"/>
    <property type="match status" value="2"/>
</dbReference>
<dbReference type="InterPro" id="IPR011545">
    <property type="entry name" value="DEAD/DEAH_box_helicase_dom"/>
</dbReference>
<dbReference type="InterPro" id="IPR014001">
    <property type="entry name" value="Helicase_ATP-bd"/>
</dbReference>
<dbReference type="InterPro" id="IPR001650">
    <property type="entry name" value="Helicase_C-like"/>
</dbReference>
<dbReference type="InterPro" id="IPR027417">
    <property type="entry name" value="P-loop_NTPase"/>
</dbReference>
<dbReference type="InterPro" id="IPR000629">
    <property type="entry name" value="RNA-helicase_DEAD-box_CS"/>
</dbReference>
<dbReference type="InterPro" id="IPR014014">
    <property type="entry name" value="RNA_helicase_DEAD_Q_motif"/>
</dbReference>
<dbReference type="PANTHER" id="PTHR47958">
    <property type="entry name" value="ATP-DEPENDENT RNA HELICASE DBP3"/>
    <property type="match status" value="1"/>
</dbReference>
<dbReference type="Pfam" id="PF00270">
    <property type="entry name" value="DEAD"/>
    <property type="match status" value="1"/>
</dbReference>
<dbReference type="Pfam" id="PF00271">
    <property type="entry name" value="Helicase_C"/>
    <property type="match status" value="1"/>
</dbReference>
<dbReference type="SMART" id="SM00487">
    <property type="entry name" value="DEXDc"/>
    <property type="match status" value="1"/>
</dbReference>
<dbReference type="SMART" id="SM00490">
    <property type="entry name" value="HELICc"/>
    <property type="match status" value="1"/>
</dbReference>
<dbReference type="SUPFAM" id="SSF52540">
    <property type="entry name" value="P-loop containing nucleoside triphosphate hydrolases"/>
    <property type="match status" value="1"/>
</dbReference>
<dbReference type="PROSITE" id="PS00039">
    <property type="entry name" value="DEAD_ATP_HELICASE"/>
    <property type="match status" value="1"/>
</dbReference>
<dbReference type="PROSITE" id="PS51192">
    <property type="entry name" value="HELICASE_ATP_BIND_1"/>
    <property type="match status" value="1"/>
</dbReference>
<dbReference type="PROSITE" id="PS51194">
    <property type="entry name" value="HELICASE_CTER"/>
    <property type="match status" value="1"/>
</dbReference>
<dbReference type="PROSITE" id="PS51195">
    <property type="entry name" value="Q_MOTIF"/>
    <property type="match status" value="1"/>
</dbReference>
<feature type="chain" id="PRO_0000294635" description="Pre-mRNA-splicing ATP-dependent RNA helicase PRP28">
    <location>
        <begin position="1"/>
        <end position="674"/>
    </location>
</feature>
<feature type="domain" description="Helicase ATP-binding" evidence="2">
    <location>
        <begin position="288"/>
        <end position="492"/>
    </location>
</feature>
<feature type="domain" description="Helicase C-terminal" evidence="3">
    <location>
        <begin position="520"/>
        <end position="666"/>
    </location>
</feature>
<feature type="region of interest" description="Disordered" evidence="4">
    <location>
        <begin position="14"/>
        <end position="213"/>
    </location>
</feature>
<feature type="short sequence motif" description="Q motif">
    <location>
        <begin position="257"/>
        <end position="285"/>
    </location>
</feature>
<feature type="short sequence motif" description="DEAD box">
    <location>
        <begin position="415"/>
        <end position="418"/>
    </location>
</feature>
<feature type="compositionally biased region" description="Basic and acidic residues" evidence="4">
    <location>
        <begin position="32"/>
        <end position="67"/>
    </location>
</feature>
<feature type="compositionally biased region" description="Basic and acidic residues" evidence="4">
    <location>
        <begin position="74"/>
        <end position="86"/>
    </location>
</feature>
<feature type="compositionally biased region" description="Low complexity" evidence="4">
    <location>
        <begin position="103"/>
        <end position="119"/>
    </location>
</feature>
<feature type="compositionally biased region" description="Basic and acidic residues" evidence="4">
    <location>
        <begin position="135"/>
        <end position="147"/>
    </location>
</feature>
<feature type="compositionally biased region" description="Basic and acidic residues" evidence="4">
    <location>
        <begin position="168"/>
        <end position="198"/>
    </location>
</feature>
<feature type="binding site" evidence="2">
    <location>
        <begin position="301"/>
        <end position="308"/>
    </location>
    <ligand>
        <name>ATP</name>
        <dbReference type="ChEBI" id="CHEBI:30616"/>
    </ligand>
</feature>
<accession>A4RK80</accession>
<accession>G4MTW0</accession>
<keyword id="KW-0067">ATP-binding</keyword>
<keyword id="KW-0963">Cytoplasm</keyword>
<keyword id="KW-0347">Helicase</keyword>
<keyword id="KW-0378">Hydrolase</keyword>
<keyword id="KW-0507">mRNA processing</keyword>
<keyword id="KW-0508">mRNA splicing</keyword>
<keyword id="KW-0547">Nucleotide-binding</keyword>
<keyword id="KW-0539">Nucleus</keyword>
<keyword id="KW-1185">Reference proteome</keyword>
<evidence type="ECO:0000250" key="1"/>
<evidence type="ECO:0000255" key="2">
    <source>
        <dbReference type="PROSITE-ProRule" id="PRU00541"/>
    </source>
</evidence>
<evidence type="ECO:0000255" key="3">
    <source>
        <dbReference type="PROSITE-ProRule" id="PRU00542"/>
    </source>
</evidence>
<evidence type="ECO:0000256" key="4">
    <source>
        <dbReference type="SAM" id="MobiDB-lite"/>
    </source>
</evidence>
<evidence type="ECO:0000305" key="5"/>